<protein>
    <recommendedName>
        <fullName evidence="1">Large ribosomal subunit protein bL9</fullName>
    </recommendedName>
    <alternativeName>
        <fullName evidence="2">50S ribosomal protein L9</fullName>
    </alternativeName>
</protein>
<feature type="chain" id="PRO_1000014806" description="Large ribosomal subunit protein bL9">
    <location>
        <begin position="1"/>
        <end position="148"/>
    </location>
</feature>
<proteinExistence type="inferred from homology"/>
<organism>
    <name type="scientific">Marinobacter nauticus (strain ATCC 700491 / DSM 11845 / VT8)</name>
    <name type="common">Marinobacter aquaeolei</name>
    <dbReference type="NCBI Taxonomy" id="351348"/>
    <lineage>
        <taxon>Bacteria</taxon>
        <taxon>Pseudomonadati</taxon>
        <taxon>Pseudomonadota</taxon>
        <taxon>Gammaproteobacteria</taxon>
        <taxon>Pseudomonadales</taxon>
        <taxon>Marinobacteraceae</taxon>
        <taxon>Marinobacter</taxon>
    </lineage>
</organism>
<gene>
    <name evidence="1" type="primary">rplI</name>
    <name type="ordered locus">Maqu_2383</name>
</gene>
<accession>A1U390</accession>
<evidence type="ECO:0000255" key="1">
    <source>
        <dbReference type="HAMAP-Rule" id="MF_00503"/>
    </source>
</evidence>
<evidence type="ECO:0000305" key="2"/>
<keyword id="KW-0687">Ribonucleoprotein</keyword>
<keyword id="KW-0689">Ribosomal protein</keyword>
<keyword id="KW-0694">RNA-binding</keyword>
<keyword id="KW-0699">rRNA-binding</keyword>
<sequence>MEVILLEKVANLGSLGDKVKVKAGYGRNFLLPYGKAVPATEANVKAFEERRAELEKAAAEKLAAAQARAEALEGASFTITSKAGEEGKLFGSIGVRDIADAVSTGGTEVEKSEVRLPEGPIRVTGEYDIELQLHTDVEVTIKLAVVAE</sequence>
<dbReference type="EMBL" id="CP000514">
    <property type="protein sequence ID" value="ABM19459.1"/>
    <property type="molecule type" value="Genomic_DNA"/>
</dbReference>
<dbReference type="RefSeq" id="WP_011785846.1">
    <property type="nucleotide sequence ID" value="NC_008740.1"/>
</dbReference>
<dbReference type="SMR" id="A1U390"/>
<dbReference type="STRING" id="351348.Maqu_2383"/>
<dbReference type="GeneID" id="31820355"/>
<dbReference type="KEGG" id="maq:Maqu_2383"/>
<dbReference type="eggNOG" id="COG0359">
    <property type="taxonomic scope" value="Bacteria"/>
</dbReference>
<dbReference type="HOGENOM" id="CLU_078938_4_1_6"/>
<dbReference type="OrthoDB" id="9788336at2"/>
<dbReference type="Proteomes" id="UP000000998">
    <property type="component" value="Chromosome"/>
</dbReference>
<dbReference type="GO" id="GO:1990904">
    <property type="term" value="C:ribonucleoprotein complex"/>
    <property type="evidence" value="ECO:0007669"/>
    <property type="project" value="UniProtKB-KW"/>
</dbReference>
<dbReference type="GO" id="GO:0005840">
    <property type="term" value="C:ribosome"/>
    <property type="evidence" value="ECO:0007669"/>
    <property type="project" value="UniProtKB-KW"/>
</dbReference>
<dbReference type="GO" id="GO:0019843">
    <property type="term" value="F:rRNA binding"/>
    <property type="evidence" value="ECO:0007669"/>
    <property type="project" value="UniProtKB-UniRule"/>
</dbReference>
<dbReference type="GO" id="GO:0003735">
    <property type="term" value="F:structural constituent of ribosome"/>
    <property type="evidence" value="ECO:0007669"/>
    <property type="project" value="InterPro"/>
</dbReference>
<dbReference type="GO" id="GO:0006412">
    <property type="term" value="P:translation"/>
    <property type="evidence" value="ECO:0007669"/>
    <property type="project" value="UniProtKB-UniRule"/>
</dbReference>
<dbReference type="Gene3D" id="3.10.430.100">
    <property type="entry name" value="Ribosomal protein L9, C-terminal domain"/>
    <property type="match status" value="1"/>
</dbReference>
<dbReference type="Gene3D" id="3.40.5.10">
    <property type="entry name" value="Ribosomal protein L9, N-terminal domain"/>
    <property type="match status" value="1"/>
</dbReference>
<dbReference type="HAMAP" id="MF_00503">
    <property type="entry name" value="Ribosomal_bL9"/>
    <property type="match status" value="1"/>
</dbReference>
<dbReference type="InterPro" id="IPR000244">
    <property type="entry name" value="Ribosomal_bL9"/>
</dbReference>
<dbReference type="InterPro" id="IPR009027">
    <property type="entry name" value="Ribosomal_bL9/RNase_H1_N"/>
</dbReference>
<dbReference type="InterPro" id="IPR020594">
    <property type="entry name" value="Ribosomal_bL9_bac/chp"/>
</dbReference>
<dbReference type="InterPro" id="IPR020069">
    <property type="entry name" value="Ribosomal_bL9_C"/>
</dbReference>
<dbReference type="InterPro" id="IPR036791">
    <property type="entry name" value="Ribosomal_bL9_C_sf"/>
</dbReference>
<dbReference type="InterPro" id="IPR020070">
    <property type="entry name" value="Ribosomal_bL9_N"/>
</dbReference>
<dbReference type="InterPro" id="IPR036935">
    <property type="entry name" value="Ribosomal_bL9_N_sf"/>
</dbReference>
<dbReference type="NCBIfam" id="TIGR00158">
    <property type="entry name" value="L9"/>
    <property type="match status" value="1"/>
</dbReference>
<dbReference type="PANTHER" id="PTHR21368">
    <property type="entry name" value="50S RIBOSOMAL PROTEIN L9"/>
    <property type="match status" value="1"/>
</dbReference>
<dbReference type="Pfam" id="PF03948">
    <property type="entry name" value="Ribosomal_L9_C"/>
    <property type="match status" value="1"/>
</dbReference>
<dbReference type="Pfam" id="PF01281">
    <property type="entry name" value="Ribosomal_L9_N"/>
    <property type="match status" value="1"/>
</dbReference>
<dbReference type="SUPFAM" id="SSF55658">
    <property type="entry name" value="L9 N-domain-like"/>
    <property type="match status" value="1"/>
</dbReference>
<dbReference type="SUPFAM" id="SSF55653">
    <property type="entry name" value="Ribosomal protein L9 C-domain"/>
    <property type="match status" value="1"/>
</dbReference>
<dbReference type="PROSITE" id="PS00651">
    <property type="entry name" value="RIBOSOMAL_L9"/>
    <property type="match status" value="1"/>
</dbReference>
<comment type="function">
    <text evidence="1">Binds to the 23S rRNA.</text>
</comment>
<comment type="similarity">
    <text evidence="1">Belongs to the bacterial ribosomal protein bL9 family.</text>
</comment>
<name>RL9_MARN8</name>
<reference key="1">
    <citation type="journal article" date="2011" name="Appl. Environ. Microbiol.">
        <title>Genomic potential of Marinobacter aquaeolei, a biogeochemical 'opportunitroph'.</title>
        <authorList>
            <person name="Singer E."/>
            <person name="Webb E.A."/>
            <person name="Nelson W.C."/>
            <person name="Heidelberg J.F."/>
            <person name="Ivanova N."/>
            <person name="Pati A."/>
            <person name="Edwards K.J."/>
        </authorList>
    </citation>
    <scope>NUCLEOTIDE SEQUENCE [LARGE SCALE GENOMIC DNA]</scope>
    <source>
        <strain>ATCC 700491 / DSM 11845 / VT8</strain>
    </source>
</reference>